<comment type="function">
    <text evidence="1">Has endoglucanase activity on substrates containing beta-1,4 glycosidic bonds, like in carboxymethylcellulose (CMC), hydroxyethylcellulose (HEC) and beta-glucan. Involved in the degradation of complex natural cellulosic substrates (By similarity).</text>
</comment>
<comment type="catalytic activity">
    <reaction>
        <text>Endohydrolysis of (1-&gt;4)-beta-D-glucosidic linkages in cellulose, lichenin and cereal beta-D-glucans.</text>
        <dbReference type="EC" id="3.2.1.4"/>
    </reaction>
</comment>
<comment type="subcellular location">
    <subcellularLocation>
        <location evidence="1">Secreted</location>
    </subcellularLocation>
</comment>
<comment type="similarity">
    <text evidence="3">Belongs to the glycosyl hydrolase 7 (cellulase C) family.</text>
</comment>
<name>CELB_ASPFU</name>
<protein>
    <recommendedName>
        <fullName>Probable endo-beta-1,4-glucanase celB</fullName>
        <shortName>Endoglucanase celB</shortName>
        <ecNumber>3.2.1.4</ecNumber>
    </recommendedName>
    <alternativeName>
        <fullName>Carboxymethylcellulase celB</fullName>
    </alternativeName>
    <alternativeName>
        <fullName>Cellulase B</fullName>
    </alternativeName>
</protein>
<keyword id="KW-0119">Carbohydrate metabolism</keyword>
<keyword id="KW-0136">Cellulose degradation</keyword>
<keyword id="KW-0325">Glycoprotein</keyword>
<keyword id="KW-0326">Glycosidase</keyword>
<keyword id="KW-0378">Hydrolase</keyword>
<keyword id="KW-0624">Polysaccharide degradation</keyword>
<keyword id="KW-1185">Reference proteome</keyword>
<keyword id="KW-0964">Secreted</keyword>
<keyword id="KW-0732">Signal</keyword>
<reference key="1">
    <citation type="journal article" date="2005" name="Nature">
        <title>Genomic sequence of the pathogenic and allergenic filamentous fungus Aspergillus fumigatus.</title>
        <authorList>
            <person name="Nierman W.C."/>
            <person name="Pain A."/>
            <person name="Anderson M.J."/>
            <person name="Wortman J.R."/>
            <person name="Kim H.S."/>
            <person name="Arroyo J."/>
            <person name="Berriman M."/>
            <person name="Abe K."/>
            <person name="Archer D.B."/>
            <person name="Bermejo C."/>
            <person name="Bennett J.W."/>
            <person name="Bowyer P."/>
            <person name="Chen D."/>
            <person name="Collins M."/>
            <person name="Coulsen R."/>
            <person name="Davies R."/>
            <person name="Dyer P.S."/>
            <person name="Farman M.L."/>
            <person name="Fedorova N."/>
            <person name="Fedorova N.D."/>
            <person name="Feldblyum T.V."/>
            <person name="Fischer R."/>
            <person name="Fosker N."/>
            <person name="Fraser A."/>
            <person name="Garcia J.L."/>
            <person name="Garcia M.J."/>
            <person name="Goble A."/>
            <person name="Goldman G.H."/>
            <person name="Gomi K."/>
            <person name="Griffith-Jones S."/>
            <person name="Gwilliam R."/>
            <person name="Haas B.J."/>
            <person name="Haas H."/>
            <person name="Harris D.E."/>
            <person name="Horiuchi H."/>
            <person name="Huang J."/>
            <person name="Humphray S."/>
            <person name="Jimenez J."/>
            <person name="Keller N."/>
            <person name="Khouri H."/>
            <person name="Kitamoto K."/>
            <person name="Kobayashi T."/>
            <person name="Konzack S."/>
            <person name="Kulkarni R."/>
            <person name="Kumagai T."/>
            <person name="Lafton A."/>
            <person name="Latge J.-P."/>
            <person name="Li W."/>
            <person name="Lord A."/>
            <person name="Lu C."/>
            <person name="Majoros W.H."/>
            <person name="May G.S."/>
            <person name="Miller B.L."/>
            <person name="Mohamoud Y."/>
            <person name="Molina M."/>
            <person name="Monod M."/>
            <person name="Mouyna I."/>
            <person name="Mulligan S."/>
            <person name="Murphy L.D."/>
            <person name="O'Neil S."/>
            <person name="Paulsen I."/>
            <person name="Penalva M.A."/>
            <person name="Pertea M."/>
            <person name="Price C."/>
            <person name="Pritchard B.L."/>
            <person name="Quail M.A."/>
            <person name="Rabbinowitsch E."/>
            <person name="Rawlins N."/>
            <person name="Rajandream M.A."/>
            <person name="Reichard U."/>
            <person name="Renauld H."/>
            <person name="Robson G.D."/>
            <person name="Rodriguez de Cordoba S."/>
            <person name="Rodriguez-Pena J.M."/>
            <person name="Ronning C.M."/>
            <person name="Rutter S."/>
            <person name="Salzberg S.L."/>
            <person name="Sanchez M."/>
            <person name="Sanchez-Ferrero J.C."/>
            <person name="Saunders D."/>
            <person name="Seeger K."/>
            <person name="Squares R."/>
            <person name="Squares S."/>
            <person name="Takeuchi M."/>
            <person name="Tekaia F."/>
            <person name="Turner G."/>
            <person name="Vazquez de Aldana C.R."/>
            <person name="Weidman J."/>
            <person name="White O."/>
            <person name="Woodward J.R."/>
            <person name="Yu J.-H."/>
            <person name="Fraser C.M."/>
            <person name="Galagan J.E."/>
            <person name="Asai K."/>
            <person name="Machida M."/>
            <person name="Hall N."/>
            <person name="Barrell B.G."/>
            <person name="Denning D.W."/>
        </authorList>
    </citation>
    <scope>NUCLEOTIDE SEQUENCE [LARGE SCALE GENOMIC DNA]</scope>
    <source>
        <strain>ATCC MYA-4609 / CBS 101355 / FGSC A1100 / Af293</strain>
    </source>
</reference>
<evidence type="ECO:0000250" key="1"/>
<evidence type="ECO:0000255" key="2"/>
<evidence type="ECO:0000305" key="3"/>
<dbReference type="EC" id="3.2.1.4"/>
<dbReference type="EMBL" id="AAHF01000015">
    <property type="protein sequence ID" value="EAL84740.1"/>
    <property type="molecule type" value="Genomic_DNA"/>
</dbReference>
<dbReference type="RefSeq" id="XP_746778.1">
    <property type="nucleotide sequence ID" value="XM_741685.1"/>
</dbReference>
<dbReference type="SMR" id="Q4WAJ6"/>
<dbReference type="STRING" id="330879.Q4WAJ6"/>
<dbReference type="GlyCosmos" id="Q4WAJ6">
    <property type="glycosylation" value="1 site, No reported glycans"/>
</dbReference>
<dbReference type="EnsemblFungi" id="EAL84740">
    <property type="protein sequence ID" value="EAL84740"/>
    <property type="gene ID" value="AFUA_7G01540"/>
</dbReference>
<dbReference type="GeneID" id="3504201"/>
<dbReference type="KEGG" id="afm:AFUA_7G01540"/>
<dbReference type="VEuPathDB" id="FungiDB:Afu7g01540"/>
<dbReference type="eggNOG" id="ENOG502SJT6">
    <property type="taxonomic scope" value="Eukaryota"/>
</dbReference>
<dbReference type="HOGENOM" id="CLU_020817_0_1_1"/>
<dbReference type="InParanoid" id="Q4WAJ6"/>
<dbReference type="OMA" id="VCCNEMD"/>
<dbReference type="OrthoDB" id="412382at2759"/>
<dbReference type="Proteomes" id="UP000002530">
    <property type="component" value="Chromosome 7"/>
</dbReference>
<dbReference type="GO" id="GO:0005576">
    <property type="term" value="C:extracellular region"/>
    <property type="evidence" value="ECO:0007669"/>
    <property type="project" value="UniProtKB-SubCell"/>
</dbReference>
<dbReference type="GO" id="GO:0008810">
    <property type="term" value="F:cellulase activity"/>
    <property type="evidence" value="ECO:0000318"/>
    <property type="project" value="GO_Central"/>
</dbReference>
<dbReference type="GO" id="GO:0030245">
    <property type="term" value="P:cellulose catabolic process"/>
    <property type="evidence" value="ECO:0007669"/>
    <property type="project" value="UniProtKB-KW"/>
</dbReference>
<dbReference type="GO" id="GO:0009251">
    <property type="term" value="P:glucan catabolic process"/>
    <property type="evidence" value="ECO:0000318"/>
    <property type="project" value="GO_Central"/>
</dbReference>
<dbReference type="CDD" id="cd07999">
    <property type="entry name" value="GH7_CBH_EG"/>
    <property type="match status" value="1"/>
</dbReference>
<dbReference type="Gene3D" id="2.70.100.10">
    <property type="entry name" value="Glycoside hydrolase, family 7, domain"/>
    <property type="match status" value="1"/>
</dbReference>
<dbReference type="InterPro" id="IPR013320">
    <property type="entry name" value="ConA-like_dom_sf"/>
</dbReference>
<dbReference type="InterPro" id="IPR001722">
    <property type="entry name" value="Glyco_hydro_7"/>
</dbReference>
<dbReference type="InterPro" id="IPR037019">
    <property type="entry name" value="Glyco_hydro_7_sf"/>
</dbReference>
<dbReference type="PANTHER" id="PTHR33753">
    <property type="entry name" value="1,4-BETA-D-GLUCAN CELLOBIOHYDROLASE B"/>
    <property type="match status" value="1"/>
</dbReference>
<dbReference type="PANTHER" id="PTHR33753:SF1">
    <property type="entry name" value="ENDO-BETA-1,4-GLUCANASE CELB"/>
    <property type="match status" value="1"/>
</dbReference>
<dbReference type="Pfam" id="PF00840">
    <property type="entry name" value="Glyco_hydro_7"/>
    <property type="match status" value="1"/>
</dbReference>
<dbReference type="PRINTS" id="PR00734">
    <property type="entry name" value="GLHYDRLASE7"/>
</dbReference>
<dbReference type="SUPFAM" id="SSF49899">
    <property type="entry name" value="Concanavalin A-like lectins/glucanases"/>
    <property type="match status" value="1"/>
</dbReference>
<gene>
    <name type="primary">celB</name>
    <name type="ORF">AFUA_7G01540</name>
</gene>
<sequence length="407" mass="43418">MAQTLAAASLVLVPLVTAQQIGSIAENHPELKTYRCGSQAGCVAQSTSVVLDINAHWIHQMGAQTSCTTSSGLDPSLCPDKVTCSQNCVVEGITDYSSFGVQNSGDAITLRQYQVQNGQIKTLRPRVYLLAEDGINYSKLQLLNQEFTFDVDASKLPCGMNGALYLSEMDASGGRSALNPAGATYGTGYCDAQCFNPGPWINGEANTLGAGACCQEMDLWEANSRSTIFSPHPCTTAGLYACTGAECYSICDGYGCTYNPYELGAKDYYGYGLTVDTAKPITVVTQFVTADNTATGTLAEIRRLYVQEGMVIGNSAVAMTEAFCSSSRTFEALGGLQRMGEALGRGMVPVFSIWDDPSLWMHWLDSDGAGPCGSTEGDPAFIQANYPNTAVTFSKVRWGDIDSTYSV</sequence>
<organism>
    <name type="scientific">Aspergillus fumigatus (strain ATCC MYA-4609 / CBS 101355 / FGSC A1100 / Af293)</name>
    <name type="common">Neosartorya fumigata</name>
    <dbReference type="NCBI Taxonomy" id="330879"/>
    <lineage>
        <taxon>Eukaryota</taxon>
        <taxon>Fungi</taxon>
        <taxon>Dikarya</taxon>
        <taxon>Ascomycota</taxon>
        <taxon>Pezizomycotina</taxon>
        <taxon>Eurotiomycetes</taxon>
        <taxon>Eurotiomycetidae</taxon>
        <taxon>Eurotiales</taxon>
        <taxon>Aspergillaceae</taxon>
        <taxon>Aspergillus</taxon>
        <taxon>Aspergillus subgen. Fumigati</taxon>
    </lineage>
</organism>
<feature type="signal peptide" evidence="2">
    <location>
        <begin position="1"/>
        <end position="18"/>
    </location>
</feature>
<feature type="chain" id="PRO_0000395156" description="Probable endo-beta-1,4-glucanase celB">
    <location>
        <begin position="19"/>
        <end position="407"/>
    </location>
</feature>
<feature type="active site" description="Nucleophile" evidence="1">
    <location>
        <position position="216"/>
    </location>
</feature>
<feature type="active site" description="Proton donor" evidence="1">
    <location>
        <position position="221"/>
    </location>
</feature>
<feature type="glycosylation site" description="N-linked (GlcNAc...) asparagine" evidence="2">
    <location>
        <position position="136"/>
    </location>
</feature>
<proteinExistence type="inferred from homology"/>
<accession>Q4WAJ6</accession>